<evidence type="ECO:0000269" key="1">
    <source>
    </source>
</evidence>
<evidence type="ECO:0000303" key="2">
    <source>
    </source>
</evidence>
<evidence type="ECO:0000305" key="3"/>
<evidence type="ECO:0000305" key="4">
    <source>
    </source>
</evidence>
<evidence type="ECO:0000312" key="5">
    <source>
        <dbReference type="Araport" id="AT5G24105"/>
    </source>
</evidence>
<sequence length="63" mass="6574">MSGSRLFFGVSTIVSIIFAILLPMAHAQSAAPAPAPTSDGTTIDQGIAYVLMLVALVLTYLIH</sequence>
<proteinExistence type="evidence at protein level"/>
<feature type="signal peptide" evidence="1">
    <location>
        <begin position="1"/>
        <end position="27"/>
    </location>
</feature>
<feature type="peptide" id="PRO_0000443531" description="Arabinogalactan protein 41" evidence="1">
    <location>
        <begin position="28"/>
        <end position="38"/>
    </location>
</feature>
<feature type="propeptide" id="PRO_0000443532" description="Removed in mature form" evidence="4">
    <location>
        <begin position="39"/>
        <end position="63"/>
    </location>
</feature>
<feature type="modified residue" description="Pyrrolidone carboxylic acid" evidence="1">
    <location>
        <position position="28"/>
    </location>
</feature>
<feature type="modified residue" description="4-hydroxyproline" evidence="1">
    <location>
        <position position="32"/>
    </location>
</feature>
<feature type="modified residue" description="4-hydroxyproline" evidence="1">
    <location>
        <position position="34"/>
    </location>
</feature>
<feature type="modified residue" description="4-hydroxyproline" evidence="1">
    <location>
        <position position="36"/>
    </location>
</feature>
<feature type="lipid moiety-binding region" description="GPI-anchor amidated serine" evidence="1">
    <location>
        <position position="38"/>
    </location>
</feature>
<feature type="glycosylation site" description="O-linked (Ara...) hydroxyproline" evidence="4">
    <location>
        <position position="32"/>
    </location>
</feature>
<feature type="glycosylation site" description="O-linked (Ara...) hydroxyproline" evidence="4">
    <location>
        <position position="34"/>
    </location>
</feature>
<feature type="glycosylation site" description="O-linked (Ara...) hydroxyproline" evidence="4">
    <location>
        <position position="36"/>
    </location>
</feature>
<comment type="function">
    <text evidence="3">Proteoglycan that seems to be implicated in diverse developmental roles such as differentiation, cell-cell recognition, embryogenesis and programmed cell death.</text>
</comment>
<comment type="subcellular location">
    <subcellularLocation>
        <location evidence="3">Cell membrane</location>
        <topology evidence="1">Lipid-anchor</topology>
        <topology evidence="1">GPI-anchor</topology>
    </subcellularLocation>
</comment>
<comment type="PTM">
    <text evidence="1">Contains 4-hydroxyproline; hydroxylated on Pro-32, Pro-34 and Pro-36.</text>
</comment>
<comment type="PTM">
    <text evidence="4">O-glycosylated on hydroxyprolines; noncontiguous hydroxylproline residues are glycosylated with arabinogalactan.</text>
</comment>
<comment type="similarity">
    <text evidence="3">Belongs to the AG-peptide AGP family.</text>
</comment>
<name>AGP41_ARATH</name>
<reference key="1">
    <citation type="journal article" date="1998" name="DNA Res.">
        <title>Structural analysis of Arabidopsis thaliana chromosome 5. V. Sequence features of the regions of 1,381,565 bp covered by twenty one physically assigned P1 and TAC clones.</title>
        <authorList>
            <person name="Kaneko T."/>
            <person name="Kotani H."/>
            <person name="Nakamura Y."/>
            <person name="Sato S."/>
            <person name="Asamizu E."/>
            <person name="Miyajima N."/>
            <person name="Tabata S."/>
        </authorList>
    </citation>
    <scope>NUCLEOTIDE SEQUENCE [LARGE SCALE GENOMIC DNA]</scope>
    <source>
        <strain>cv. Columbia</strain>
    </source>
</reference>
<reference key="2">
    <citation type="journal article" date="2017" name="Plant J.">
        <title>Araport11: a complete reannotation of the Arabidopsis thaliana reference genome.</title>
        <authorList>
            <person name="Cheng C.Y."/>
            <person name="Krishnakumar V."/>
            <person name="Chan A.P."/>
            <person name="Thibaud-Nissen F."/>
            <person name="Schobel S."/>
            <person name="Town C.D."/>
        </authorList>
    </citation>
    <scope>GENOME REANNOTATION</scope>
    <source>
        <strain>cv. Columbia</strain>
    </source>
</reference>
<reference key="3">
    <citation type="submission" date="2005-03" db="EMBL/GenBank/DDBJ databases">
        <title>Large-scale analysis of RIKEN Arabidopsis full-length (RAFL) cDNAs.</title>
        <authorList>
            <person name="Totoki Y."/>
            <person name="Seki M."/>
            <person name="Ishida J."/>
            <person name="Nakajima M."/>
            <person name="Enju A."/>
            <person name="Kamiya A."/>
            <person name="Narusaka M."/>
            <person name="Shin-i T."/>
            <person name="Nakagawa M."/>
            <person name="Sakamoto N."/>
            <person name="Oishi K."/>
            <person name="Kohara Y."/>
            <person name="Kobayashi M."/>
            <person name="Toyoda A."/>
            <person name="Sakaki Y."/>
            <person name="Sakurai T."/>
            <person name="Iida K."/>
            <person name="Akiyama K."/>
            <person name="Satou M."/>
            <person name="Toyoda T."/>
            <person name="Konagaya A."/>
            <person name="Carninci P."/>
            <person name="Kawai J."/>
            <person name="Hayashizaki Y."/>
            <person name="Shinozaki K."/>
        </authorList>
    </citation>
    <scope>NUCLEOTIDE SEQUENCE [LARGE SCALE MRNA]</scope>
    <source>
        <strain>cv. Columbia</strain>
    </source>
</reference>
<reference key="4">
    <citation type="submission" date="2006-06" db="EMBL/GenBank/DDBJ databases">
        <title>Arabidopsis ORF clones.</title>
        <authorList>
            <person name="Shinn P."/>
            <person name="Chen H."/>
            <person name="Kim C.J."/>
            <person name="Quinitio C."/>
            <person name="Ecker J.R."/>
        </authorList>
    </citation>
    <scope>NUCLEOTIDE SEQUENCE [LARGE SCALE MRNA]</scope>
    <source>
        <strain>cv. Columbia</strain>
    </source>
</reference>
<reference key="5">
    <citation type="submission" date="2002-03" db="EMBL/GenBank/DDBJ databases">
        <title>Full-length cDNA from Arabidopsis thaliana.</title>
        <authorList>
            <person name="Brover V.V."/>
            <person name="Troukhan M.E."/>
            <person name="Alexandrov N.A."/>
            <person name="Lu Y.-P."/>
            <person name="Flavell R.B."/>
            <person name="Feldmann K.A."/>
        </authorList>
    </citation>
    <scope>NUCLEOTIDE SEQUENCE [LARGE SCALE MRNA]</scope>
</reference>
<reference key="6">
    <citation type="journal article" date="2004" name="J. Biol. Chem.">
        <title>Post-translational modifications of arabinogalactan-peptides of Arabidopsis thaliana. Endoplasmic reticulum and glycosylphosphatidylinositol-anchor signal cleavage sites and hydroxylation of proline.</title>
        <authorList>
            <person name="Schultz C.J."/>
            <person name="Ferguson K.L."/>
            <person name="Lahnstein J."/>
            <person name="Bacic A."/>
        </authorList>
    </citation>
    <scope>PROTEIN SEQUENCE OF 28-38</scope>
    <scope>HYDROXYLATION AT PRO-32; PRO-34 AND PRO-36</scope>
    <scope>PYROGLUTAMATE FORMATION AT GLN-28</scope>
    <scope>GLYCOSYLATION AT PRO-32; PRO-34 AND PRO-36</scope>
    <scope>GPI-ANCHOR AT SER-38</scope>
</reference>
<keyword id="KW-1003">Cell membrane</keyword>
<keyword id="KW-0903">Direct protein sequencing</keyword>
<keyword id="KW-0325">Glycoprotein</keyword>
<keyword id="KW-0336">GPI-anchor</keyword>
<keyword id="KW-0379">Hydroxylation</keyword>
<keyword id="KW-0449">Lipoprotein</keyword>
<keyword id="KW-0472">Membrane</keyword>
<keyword id="KW-0654">Proteoglycan</keyword>
<keyword id="KW-0873">Pyrrolidone carboxylic acid</keyword>
<keyword id="KW-1185">Reference proteome</keyword>
<keyword id="KW-0732">Signal</keyword>
<accession>Q8L9T8</accession>
<dbReference type="EMBL" id="AB010696">
    <property type="status" value="NOT_ANNOTATED_CDS"/>
    <property type="molecule type" value="Genomic_DNA"/>
</dbReference>
<dbReference type="EMBL" id="CP002688">
    <property type="protein sequence ID" value="AED93257.1"/>
    <property type="molecule type" value="Genomic_DNA"/>
</dbReference>
<dbReference type="EMBL" id="AK221000">
    <property type="protein sequence ID" value="BAD94646.1"/>
    <property type="molecule type" value="mRNA"/>
</dbReference>
<dbReference type="EMBL" id="AK220598">
    <property type="protein sequence ID" value="BAD94927.1"/>
    <property type="molecule type" value="mRNA"/>
</dbReference>
<dbReference type="EMBL" id="BT025631">
    <property type="protein sequence ID" value="ABF74692.1"/>
    <property type="molecule type" value="mRNA"/>
</dbReference>
<dbReference type="EMBL" id="AY088224">
    <property type="protein sequence ID" value="AAM65765.1"/>
    <property type="molecule type" value="mRNA"/>
</dbReference>
<dbReference type="RefSeq" id="NP_974828.1">
    <property type="nucleotide sequence ID" value="NM_203099.2"/>
</dbReference>
<dbReference type="FunCoup" id="Q8L9T8">
    <property type="interactions" value="12"/>
</dbReference>
<dbReference type="STRING" id="3702.Q8L9T8"/>
<dbReference type="GlyCosmos" id="Q8L9T8">
    <property type="glycosylation" value="3 sites, No reported glycans"/>
</dbReference>
<dbReference type="PaxDb" id="3702-AT5G24105.1"/>
<dbReference type="EnsemblPlants" id="AT5G24105.1">
    <property type="protein sequence ID" value="AT5G24105.1"/>
    <property type="gene ID" value="AT5G24105"/>
</dbReference>
<dbReference type="GeneID" id="2745995"/>
<dbReference type="Gramene" id="AT5G24105.1">
    <property type="protein sequence ID" value="AT5G24105.1"/>
    <property type="gene ID" value="AT5G24105"/>
</dbReference>
<dbReference type="KEGG" id="ath:AT5G24105"/>
<dbReference type="Araport" id="AT5G24105"/>
<dbReference type="TAIR" id="AT5G24105">
    <property type="gene designation" value="AGP41"/>
</dbReference>
<dbReference type="eggNOG" id="ENOG502S708">
    <property type="taxonomic scope" value="Eukaryota"/>
</dbReference>
<dbReference type="HOGENOM" id="CLU_187330_1_1_1"/>
<dbReference type="InParanoid" id="Q8L9T8"/>
<dbReference type="OMA" id="AYAYRIS"/>
<dbReference type="PhylomeDB" id="Q8L9T8"/>
<dbReference type="PRO" id="PR:Q8L9T8"/>
<dbReference type="Proteomes" id="UP000006548">
    <property type="component" value="Chromosome 5"/>
</dbReference>
<dbReference type="ExpressionAtlas" id="Q8L9T8">
    <property type="expression patterns" value="baseline and differential"/>
</dbReference>
<dbReference type="GO" id="GO:0005886">
    <property type="term" value="C:plasma membrane"/>
    <property type="evidence" value="ECO:0007669"/>
    <property type="project" value="UniProtKB-SubCell"/>
</dbReference>
<dbReference type="GO" id="GO:0098552">
    <property type="term" value="C:side of membrane"/>
    <property type="evidence" value="ECO:0007669"/>
    <property type="project" value="UniProtKB-KW"/>
</dbReference>
<dbReference type="InterPro" id="IPR009424">
    <property type="entry name" value="AGP16/20/22/41"/>
</dbReference>
<dbReference type="PANTHER" id="PTHR33374">
    <property type="entry name" value="ARABINOGALACTAN PROTEIN 20"/>
    <property type="match status" value="1"/>
</dbReference>
<dbReference type="Pfam" id="PF06376">
    <property type="entry name" value="AGP"/>
    <property type="match status" value="1"/>
</dbReference>
<gene>
    <name evidence="2" type="primary">AGP41</name>
    <name evidence="5" type="ordered locus">At5g24105</name>
</gene>
<protein>
    <recommendedName>
        <fullName evidence="2">Arabinogalactan protein 41</fullName>
        <shortName evidence="2">AtAGP41</shortName>
    </recommendedName>
    <alternativeName>
        <fullName evidence="2">Arabinogalactan peptide 41</fullName>
        <shortName evidence="2">AG-peptide 41</shortName>
    </alternativeName>
</protein>
<organism>
    <name type="scientific">Arabidopsis thaliana</name>
    <name type="common">Mouse-ear cress</name>
    <dbReference type="NCBI Taxonomy" id="3702"/>
    <lineage>
        <taxon>Eukaryota</taxon>
        <taxon>Viridiplantae</taxon>
        <taxon>Streptophyta</taxon>
        <taxon>Embryophyta</taxon>
        <taxon>Tracheophyta</taxon>
        <taxon>Spermatophyta</taxon>
        <taxon>Magnoliopsida</taxon>
        <taxon>eudicotyledons</taxon>
        <taxon>Gunneridae</taxon>
        <taxon>Pentapetalae</taxon>
        <taxon>rosids</taxon>
        <taxon>malvids</taxon>
        <taxon>Brassicales</taxon>
        <taxon>Brassicaceae</taxon>
        <taxon>Camelineae</taxon>
        <taxon>Arabidopsis</taxon>
    </lineage>
</organism>